<accession>Q58973</accession>
<sequence length="259" mass="29004">MDNNRKVIIVGAGPGDPELITIKGKKAIEEADVIIYAGSLVNEKLLEYNKKNAEIYNSANMNLEEIIDVMVKAVNQGKKVVRLHTGDPSIYGAIKEQIDELSKYGIDVEIIPGVSSLFAATASLKVELTLPEVSQTVIITRPEGRTPMPEKEKLRDLAKHQSTMAIFLGVSMIDKVVKELIEGGYREETPVAVVYHASWDDEKIVRGTLKDIAEKVKKEGIKKTALIIVGEVLNPKYYAYSKLYDKNFEHEYRKSHKKF</sequence>
<name>CBIF_METJA</name>
<dbReference type="EC" id="2.1.1.271"/>
<dbReference type="EMBL" id="L77117">
    <property type="protein sequence ID" value="AAB99599.1"/>
    <property type="molecule type" value="Genomic_DNA"/>
</dbReference>
<dbReference type="PIR" id="A64497">
    <property type="entry name" value="A64497"/>
</dbReference>
<dbReference type="RefSeq" id="WP_010871103.1">
    <property type="nucleotide sequence ID" value="NC_000909.1"/>
</dbReference>
<dbReference type="SMR" id="Q58973"/>
<dbReference type="FunCoup" id="Q58973">
    <property type="interactions" value="110"/>
</dbReference>
<dbReference type="STRING" id="243232.MJ_1578"/>
<dbReference type="PaxDb" id="243232-MJ_1578"/>
<dbReference type="EnsemblBacteria" id="AAB99599">
    <property type="protein sequence ID" value="AAB99599"/>
    <property type="gene ID" value="MJ_1578"/>
</dbReference>
<dbReference type="GeneID" id="1452487"/>
<dbReference type="KEGG" id="mja:MJ_1578"/>
<dbReference type="eggNOG" id="arCOG00645">
    <property type="taxonomic scope" value="Archaea"/>
</dbReference>
<dbReference type="HOGENOM" id="CLU_011276_7_1_2"/>
<dbReference type="InParanoid" id="Q58973"/>
<dbReference type="OrthoDB" id="6633at2157"/>
<dbReference type="PhylomeDB" id="Q58973"/>
<dbReference type="UniPathway" id="UPA00148">
    <property type="reaction ID" value="UER00226"/>
</dbReference>
<dbReference type="Proteomes" id="UP000000805">
    <property type="component" value="Chromosome"/>
</dbReference>
<dbReference type="GO" id="GO:0046026">
    <property type="term" value="F:precorrin-4 C11-methyltransferase activity"/>
    <property type="evidence" value="ECO:0007669"/>
    <property type="project" value="InterPro"/>
</dbReference>
<dbReference type="GO" id="GO:0009236">
    <property type="term" value="P:cobalamin biosynthetic process"/>
    <property type="evidence" value="ECO:0007669"/>
    <property type="project" value="UniProtKB-UniPathway"/>
</dbReference>
<dbReference type="GO" id="GO:0032259">
    <property type="term" value="P:methylation"/>
    <property type="evidence" value="ECO:0007669"/>
    <property type="project" value="UniProtKB-KW"/>
</dbReference>
<dbReference type="GO" id="GO:0019354">
    <property type="term" value="P:siroheme biosynthetic process"/>
    <property type="evidence" value="ECO:0007669"/>
    <property type="project" value="InterPro"/>
</dbReference>
<dbReference type="CDD" id="cd11641">
    <property type="entry name" value="Precorrin-4_C11-MT"/>
    <property type="match status" value="1"/>
</dbReference>
<dbReference type="Gene3D" id="3.40.1010.10">
    <property type="entry name" value="Cobalt-precorrin-4 Transmethylase, Domain 1"/>
    <property type="match status" value="1"/>
</dbReference>
<dbReference type="Gene3D" id="3.30.950.10">
    <property type="entry name" value="Methyltransferase, Cobalt-precorrin-4 Transmethylase, Domain 2"/>
    <property type="match status" value="1"/>
</dbReference>
<dbReference type="InterPro" id="IPR000878">
    <property type="entry name" value="4pyrrol_Mease"/>
</dbReference>
<dbReference type="InterPro" id="IPR035996">
    <property type="entry name" value="4pyrrol_Methylase_sf"/>
</dbReference>
<dbReference type="InterPro" id="IPR014777">
    <property type="entry name" value="4pyrrole_Mease_sub1"/>
</dbReference>
<dbReference type="InterPro" id="IPR014776">
    <property type="entry name" value="4pyrrole_Mease_sub2"/>
</dbReference>
<dbReference type="InterPro" id="IPR006362">
    <property type="entry name" value="Cbl_synth_CobM/CibF"/>
</dbReference>
<dbReference type="InterPro" id="IPR006366">
    <property type="entry name" value="CobA/CysG_C"/>
</dbReference>
<dbReference type="InterPro" id="IPR050161">
    <property type="entry name" value="Siro_Cobalamin_biosynth"/>
</dbReference>
<dbReference type="InterPro" id="IPR003043">
    <property type="entry name" value="Uropor_MeTrfase_CS"/>
</dbReference>
<dbReference type="NCBIfam" id="TIGR01469">
    <property type="entry name" value="cobA_cysG_Cterm"/>
    <property type="match status" value="1"/>
</dbReference>
<dbReference type="NCBIfam" id="TIGR01465">
    <property type="entry name" value="cobM_cbiF"/>
    <property type="match status" value="1"/>
</dbReference>
<dbReference type="NCBIfam" id="NF004790">
    <property type="entry name" value="PRK06136.1"/>
    <property type="match status" value="1"/>
</dbReference>
<dbReference type="PANTHER" id="PTHR45790:SF4">
    <property type="entry name" value="COBALT-PRECORRIN-4 C(11)-METHYLTRANSFERASE"/>
    <property type="match status" value="1"/>
</dbReference>
<dbReference type="PANTHER" id="PTHR45790">
    <property type="entry name" value="SIROHEME SYNTHASE-RELATED"/>
    <property type="match status" value="1"/>
</dbReference>
<dbReference type="Pfam" id="PF00590">
    <property type="entry name" value="TP_methylase"/>
    <property type="match status" value="1"/>
</dbReference>
<dbReference type="SUPFAM" id="SSF53790">
    <property type="entry name" value="Tetrapyrrole methylase"/>
    <property type="match status" value="1"/>
</dbReference>
<dbReference type="PROSITE" id="PS00839">
    <property type="entry name" value="SUMT_1"/>
    <property type="match status" value="1"/>
</dbReference>
<dbReference type="PROSITE" id="PS00840">
    <property type="entry name" value="SUMT_2"/>
    <property type="match status" value="1"/>
</dbReference>
<proteinExistence type="inferred from homology"/>
<evidence type="ECO:0000250" key="1"/>
<evidence type="ECO:0000305" key="2"/>
<keyword id="KW-0169">Cobalamin biosynthesis</keyword>
<keyword id="KW-0489">Methyltransferase</keyword>
<keyword id="KW-1185">Reference proteome</keyword>
<keyword id="KW-0949">S-adenosyl-L-methionine</keyword>
<keyword id="KW-0808">Transferase</keyword>
<comment type="function">
    <text evidence="1">Catalyzes the methylation of C-11 in cobalt-precorrin-4 to form cobalt-precorrin-5A.</text>
</comment>
<comment type="catalytic activity">
    <reaction>
        <text>Co-precorrin-4 + S-adenosyl-L-methionine = Co-precorrin-5A + S-adenosyl-L-homocysteine + H(+)</text>
        <dbReference type="Rhea" id="RHEA:26277"/>
        <dbReference type="ChEBI" id="CHEBI:15378"/>
        <dbReference type="ChEBI" id="CHEBI:57856"/>
        <dbReference type="ChEBI" id="CHEBI:59789"/>
        <dbReference type="ChEBI" id="CHEBI:60061"/>
        <dbReference type="ChEBI" id="CHEBI:60062"/>
        <dbReference type="EC" id="2.1.1.271"/>
    </reaction>
</comment>
<comment type="pathway">
    <text>Cofactor biosynthesis; adenosylcobalamin biosynthesis; cob(II)yrinate a,c-diamide from sirohydrochlorin (anaerobic route): step 4/10.</text>
</comment>
<comment type="similarity">
    <text evidence="2">Belongs to the precorrin methyltransferase family.</text>
</comment>
<organism>
    <name type="scientific">Methanocaldococcus jannaschii (strain ATCC 43067 / DSM 2661 / JAL-1 / JCM 10045 / NBRC 100440)</name>
    <name type="common">Methanococcus jannaschii</name>
    <dbReference type="NCBI Taxonomy" id="243232"/>
    <lineage>
        <taxon>Archaea</taxon>
        <taxon>Methanobacteriati</taxon>
        <taxon>Methanobacteriota</taxon>
        <taxon>Methanomada group</taxon>
        <taxon>Methanococci</taxon>
        <taxon>Methanococcales</taxon>
        <taxon>Methanocaldococcaceae</taxon>
        <taxon>Methanocaldococcus</taxon>
    </lineage>
</organism>
<feature type="chain" id="PRO_0000150399" description="Cobalt-precorrin-4 C(11)-methyltransferase">
    <location>
        <begin position="1"/>
        <end position="259"/>
    </location>
</feature>
<protein>
    <recommendedName>
        <fullName>Cobalt-precorrin-4 C(11)-methyltransferase</fullName>
        <ecNumber>2.1.1.271</ecNumber>
    </recommendedName>
    <alternativeName>
        <fullName>Cobalt-precorrin-3 methylase</fullName>
    </alternativeName>
</protein>
<gene>
    <name type="primary">cbiF</name>
    <name type="ordered locus">MJ1578</name>
</gene>
<reference key="1">
    <citation type="journal article" date="1996" name="Science">
        <title>Complete genome sequence of the methanogenic archaeon, Methanococcus jannaschii.</title>
        <authorList>
            <person name="Bult C.J."/>
            <person name="White O."/>
            <person name="Olsen G.J."/>
            <person name="Zhou L."/>
            <person name="Fleischmann R.D."/>
            <person name="Sutton G.G."/>
            <person name="Blake J.A."/>
            <person name="FitzGerald L.M."/>
            <person name="Clayton R.A."/>
            <person name="Gocayne J.D."/>
            <person name="Kerlavage A.R."/>
            <person name="Dougherty B.A."/>
            <person name="Tomb J.-F."/>
            <person name="Adams M.D."/>
            <person name="Reich C.I."/>
            <person name="Overbeek R."/>
            <person name="Kirkness E.F."/>
            <person name="Weinstock K.G."/>
            <person name="Merrick J.M."/>
            <person name="Glodek A."/>
            <person name="Scott J.L."/>
            <person name="Geoghagen N.S.M."/>
            <person name="Weidman J.F."/>
            <person name="Fuhrmann J.L."/>
            <person name="Nguyen D."/>
            <person name="Utterback T.R."/>
            <person name="Kelley J.M."/>
            <person name="Peterson J.D."/>
            <person name="Sadow P.W."/>
            <person name="Hanna M.C."/>
            <person name="Cotton M.D."/>
            <person name="Roberts K.M."/>
            <person name="Hurst M.A."/>
            <person name="Kaine B.P."/>
            <person name="Borodovsky M."/>
            <person name="Klenk H.-P."/>
            <person name="Fraser C.M."/>
            <person name="Smith H.O."/>
            <person name="Woese C.R."/>
            <person name="Venter J.C."/>
        </authorList>
    </citation>
    <scope>NUCLEOTIDE SEQUENCE [LARGE SCALE GENOMIC DNA]</scope>
    <source>
        <strain>ATCC 43067 / DSM 2661 / JAL-1 / JCM 10045 / NBRC 100440</strain>
    </source>
</reference>